<keyword id="KW-0408">Iron</keyword>
<keyword id="KW-0464">Manganese</keyword>
<keyword id="KW-0479">Metal-binding</keyword>
<keyword id="KW-0560">Oxidoreductase</keyword>
<gene>
    <name type="ordered locus">Mmcs_4214</name>
</gene>
<feature type="chain" id="PRO_0000375431" description="R2-like ligand binding oxidase">
    <location>
        <begin position="1"/>
        <end position="312"/>
    </location>
</feature>
<feature type="binding site" evidence="1">
    <location>
        <position position="68"/>
    </location>
    <ligand>
        <name>Mn(2+)</name>
        <dbReference type="ChEBI" id="CHEBI:29035"/>
    </ligand>
</feature>
<feature type="binding site" evidence="1">
    <location>
        <position position="101"/>
    </location>
    <ligand>
        <name>Fe cation</name>
        <dbReference type="ChEBI" id="CHEBI:24875"/>
    </ligand>
</feature>
<feature type="binding site" evidence="1">
    <location>
        <position position="101"/>
    </location>
    <ligand>
        <name>Mn(2+)</name>
        <dbReference type="ChEBI" id="CHEBI:29035"/>
    </ligand>
</feature>
<feature type="binding site" evidence="1">
    <location>
        <position position="104"/>
    </location>
    <ligand>
        <name>Mn(2+)</name>
        <dbReference type="ChEBI" id="CHEBI:29035"/>
    </ligand>
</feature>
<feature type="binding site" evidence="1">
    <location>
        <position position="167"/>
    </location>
    <ligand>
        <name>Fe cation</name>
        <dbReference type="ChEBI" id="CHEBI:24875"/>
    </ligand>
</feature>
<feature type="binding site" evidence="1">
    <location>
        <position position="202"/>
    </location>
    <ligand>
        <name>Fe cation</name>
        <dbReference type="ChEBI" id="CHEBI:24875"/>
    </ligand>
</feature>
<feature type="binding site" evidence="1">
    <location>
        <position position="205"/>
    </location>
    <ligand>
        <name>Fe cation</name>
        <dbReference type="ChEBI" id="CHEBI:24875"/>
    </ligand>
</feature>
<feature type="cross-link" description="3-(O4'-tyrosyl)-valine (Val-Tyr)" evidence="1">
    <location>
        <begin position="71"/>
        <end position="162"/>
    </location>
</feature>
<name>RIR2H_MYCSS</name>
<accession>Q1B465</accession>
<organism>
    <name type="scientific">Mycobacterium sp. (strain MCS)</name>
    <dbReference type="NCBI Taxonomy" id="164756"/>
    <lineage>
        <taxon>Bacteria</taxon>
        <taxon>Bacillati</taxon>
        <taxon>Actinomycetota</taxon>
        <taxon>Actinomycetes</taxon>
        <taxon>Mycobacteriales</taxon>
        <taxon>Mycobacteriaceae</taxon>
        <taxon>Mycobacterium</taxon>
    </lineage>
</organism>
<reference key="1">
    <citation type="submission" date="2006-06" db="EMBL/GenBank/DDBJ databases">
        <title>Complete sequence of chromosome of Mycobacterium sp. MCS.</title>
        <authorList>
            <consortium name="US DOE Joint Genome Institute"/>
            <person name="Copeland A."/>
            <person name="Lucas S."/>
            <person name="Lapidus A."/>
            <person name="Barry K."/>
            <person name="Detter J.C."/>
            <person name="Glavina del Rio T."/>
            <person name="Hammon N."/>
            <person name="Israni S."/>
            <person name="Dalin E."/>
            <person name="Tice H."/>
            <person name="Pitluck S."/>
            <person name="Martinez M."/>
            <person name="Schmutz J."/>
            <person name="Larimer F."/>
            <person name="Land M."/>
            <person name="Hauser L."/>
            <person name="Kyrpides N."/>
            <person name="Kim E."/>
            <person name="Miller C.D."/>
            <person name="Hughes J.E."/>
            <person name="Anderson A.J."/>
            <person name="Sims R.C."/>
            <person name="Richardson P."/>
        </authorList>
    </citation>
    <scope>NUCLEOTIDE SEQUENCE [LARGE SCALE GENOMIC DNA]</scope>
    <source>
        <strain>MCS</strain>
    </source>
</reference>
<evidence type="ECO:0000250" key="1">
    <source>
        <dbReference type="UniProtKB" id="P9WH69"/>
    </source>
</evidence>
<evidence type="ECO:0000305" key="2"/>
<proteinExistence type="inferred from homology"/>
<comment type="function">
    <text evidence="1">Probable oxidase that might be involved in lipid metabolism.</text>
</comment>
<comment type="cofactor">
    <cofactor evidence="1">
        <name>Fe cation</name>
        <dbReference type="ChEBI" id="CHEBI:24875"/>
    </cofactor>
    <text evidence="1">Binds 1 Fe cation per subunit.</text>
</comment>
<comment type="cofactor">
    <cofactor evidence="1">
        <name>Mn(2+)</name>
        <dbReference type="ChEBI" id="CHEBI:29035"/>
    </cofactor>
    <text evidence="1">Binds 1 manganese ion per subunit. The iron and manganese ions form a dinuclear manganese-iron cluster.</text>
</comment>
<comment type="subunit">
    <text evidence="1">Homodimer.</text>
</comment>
<comment type="similarity">
    <text evidence="2">Belongs to the ribonucleoside diphosphate reductase small chain family. R2-like ligand binding oxidase subfamily.</text>
</comment>
<dbReference type="EC" id="1.-.-.-" evidence="1"/>
<dbReference type="EMBL" id="CP000384">
    <property type="protein sequence ID" value="ABG10319.1"/>
    <property type="molecule type" value="Genomic_DNA"/>
</dbReference>
<dbReference type="SMR" id="Q1B465"/>
<dbReference type="KEGG" id="mmc:Mmcs_4214"/>
<dbReference type="HOGENOM" id="CLU_072736_0_0_11"/>
<dbReference type="BioCyc" id="MSP164756:G1G6O-4300-MONOMER"/>
<dbReference type="GO" id="GO:0046872">
    <property type="term" value="F:metal ion binding"/>
    <property type="evidence" value="ECO:0007669"/>
    <property type="project" value="UniProtKB-KW"/>
</dbReference>
<dbReference type="GO" id="GO:0016491">
    <property type="term" value="F:oxidoreductase activity"/>
    <property type="evidence" value="ECO:0007669"/>
    <property type="project" value="UniProtKB-KW"/>
</dbReference>
<dbReference type="GO" id="GO:0009263">
    <property type="term" value="P:deoxyribonucleotide biosynthetic process"/>
    <property type="evidence" value="ECO:0007669"/>
    <property type="project" value="InterPro"/>
</dbReference>
<dbReference type="CDD" id="cd07911">
    <property type="entry name" value="RNRR2_Rv0233_like"/>
    <property type="match status" value="1"/>
</dbReference>
<dbReference type="Gene3D" id="1.10.620.20">
    <property type="entry name" value="Ribonucleotide Reductase, subunit A"/>
    <property type="match status" value="1"/>
</dbReference>
<dbReference type="InterPro" id="IPR009078">
    <property type="entry name" value="Ferritin-like_SF"/>
</dbReference>
<dbReference type="InterPro" id="IPR033908">
    <property type="entry name" value="R2LOX"/>
</dbReference>
<dbReference type="InterPro" id="IPR012348">
    <property type="entry name" value="RNR-like"/>
</dbReference>
<dbReference type="InterPro" id="IPR000358">
    <property type="entry name" value="RNR_small_fam"/>
</dbReference>
<dbReference type="NCBIfam" id="NF006199">
    <property type="entry name" value="PRK08326.1-2"/>
    <property type="match status" value="1"/>
</dbReference>
<dbReference type="NCBIfam" id="NF006200">
    <property type="entry name" value="PRK08326.1-3"/>
    <property type="match status" value="1"/>
</dbReference>
<dbReference type="NCBIfam" id="NF006201">
    <property type="entry name" value="PRK08326.1-4"/>
    <property type="match status" value="1"/>
</dbReference>
<dbReference type="Pfam" id="PF00268">
    <property type="entry name" value="Ribonuc_red_sm"/>
    <property type="match status" value="1"/>
</dbReference>
<dbReference type="SUPFAM" id="SSF47240">
    <property type="entry name" value="Ferritin-like"/>
    <property type="match status" value="1"/>
</dbReference>
<sequence>MTRTRSDSLAAGGLNWNSMPLKLFAGGNAKFWDPADIDFSRDRADWESLSNLERDWATRLCAQFIAGEEAVTQDIQPFMAAMRAEGRLGDEMYLTQFAFEEAKHTQVFRMWLDAVGMTDDLQCYLDDLPSYRQMFYEELPASLEALATDPSPAAQVRASATYNHVIEGMMALTGYYAWHRICVDRKVLPGMQELVRRIGDDERRHMAWGTFTCRRHVAADDANWEVFENRMNELIPLALSNTDDSFALYDEIPFGFAKEEFQQYAADKGMRRFGTISSARGRALAEIDVDYSPLQLEDTFAAEDSRVLATSA</sequence>
<protein>
    <recommendedName>
        <fullName evidence="1">R2-like ligand binding oxidase</fullName>
        <ecNumber evidence="1">1.-.-.-</ecNumber>
    </recommendedName>
    <alternativeName>
        <fullName>Ribonucleotide reductase R2 subunit homolog</fullName>
    </alternativeName>
    <alternativeName>
        <fullName>Ribonucleotide reductase small subunit homolog</fullName>
    </alternativeName>
</protein>